<name>ALG9_MOUSE</name>
<comment type="function">
    <text evidence="2">Mannosyltransferase that operates in the biosynthetic pathway of dolichol-linked oligosaccharides, the glycan precursors employed in protein asparagine (N)-glycosylation. The assembly of dolichol-linked oligosaccharides begins on the cytosolic side of the endoplasmic reticulum membrane and finishes in its lumen. The sequential addition of sugars to dolichol pyrophosphate produces dolichol-linked oligosaccharides containing fourteen sugars, including two GlcNAcs, nine mannoses and three glucoses. Once assembled, the oligosaccharide is transferred from the lipid to nascent proteins by oligosaccharyltransferases. In the lumen of the endoplasmic reticulum, catalyzes the addition of the seventh and ninth alpha-1,2-linked mannose residues to Man(6)GlcNAc(2)-PP-dolichol and Man(8)GlcNAc(2)-PP-dolichol respectively.</text>
</comment>
<comment type="catalytic activity">
    <reaction evidence="2">
        <text>an alpha-D-Man-(1-&gt;2)-alpha-D-Man-(1-&gt;2)-alpha-D-Man-(1-&gt;3)-[alpha-D-Man-(1-&gt;3)-alpha-D-Man-(1-&gt;6)]-beta-D-Man-(1-&gt;4)-beta-D-GlcNAc-(1-&gt;4)-alpha-D-GlcNAc-diphospho-di-trans,poly-cis-dolichol + a di-trans,poly-cis-dolichyl beta-D-mannosyl phosphate = an alpha-D-Man-(1-&gt;2)-alpha-D-Man-(1-&gt;2)-alpha-D-Man-(1-&gt;3)-[alpha-D-Man-(1-&gt;2)-alpha-D-Man-(1-&gt;3)-alpha-D-Man-(1-&gt;6)]-beta-D-Man-(1-&gt;4)-beta-D-GlcNAc-(1-&gt;4)-alpha-D-GlcNAc-diphospho-di-trans,poly-cis-dolichol + a di-trans,poly-cis-dolichyl phosphate + H(+)</text>
        <dbReference type="Rhea" id="RHEA:29531"/>
        <dbReference type="Rhea" id="RHEA-COMP:19498"/>
        <dbReference type="Rhea" id="RHEA-COMP:19501"/>
        <dbReference type="Rhea" id="RHEA-COMP:19517"/>
        <dbReference type="Rhea" id="RHEA-COMP:19518"/>
        <dbReference type="ChEBI" id="CHEBI:15378"/>
        <dbReference type="ChEBI" id="CHEBI:57683"/>
        <dbReference type="ChEBI" id="CHEBI:58211"/>
        <dbReference type="ChEBI" id="CHEBI:132516"/>
        <dbReference type="ChEBI" id="CHEBI:132517"/>
        <dbReference type="EC" id="2.4.1.259"/>
    </reaction>
    <physiologicalReaction direction="left-to-right" evidence="2">
        <dbReference type="Rhea" id="RHEA:29532"/>
    </physiologicalReaction>
</comment>
<comment type="catalytic activity">
    <reaction evidence="2">
        <text>an alpha-D-Man-(1-&gt;2)-alpha-D-Man-(1-&gt;2)-alpha-D-Man-(1-&gt;3)-[alpha-D-Man-(1-&gt;2)-alpha-D-Man-(1-&gt;3)-[alpha-D-Man-(1-&gt;6)]-alpha-D-Man-(1-&gt;6)]-beta-D-Man-(1-&gt;4)-beta-D-GlcNAc-(1-&gt;4)-alpha-D-GlcNAc-diphospho-di-trans,poly-cis-dolichol + a di-trans,poly-cis-dolichyl beta-D-mannosyl phosphate = an alpha-D-Man-(1-&gt;2)-alpha-D-Man-(1-&gt;2)-alpha-D-Man-(1-&gt;3)-[alpha-D-Man-(1-&gt;2)-alpha-D-Man-(1-&gt;3)-[alpha-D-Man-(1-&gt;2)-alpha-D-Man-(1-&gt;6)]-alpha-D-Man-(1-&gt;6)]-beta-D-Man-(1-&gt;4)-beta-D-GlcNAc-(1-&gt;4)-alpha-D-GlcNAc-diphospho-di-trans,poly-cis-dolichol + a di-trans,poly-cis-dolichyl phosphate + H(+)</text>
        <dbReference type="Rhea" id="RHEA:29539"/>
        <dbReference type="Rhea" id="RHEA-COMP:19498"/>
        <dbReference type="Rhea" id="RHEA-COMP:19501"/>
        <dbReference type="Rhea" id="RHEA-COMP:19519"/>
        <dbReference type="Rhea" id="RHEA-COMP:19520"/>
        <dbReference type="ChEBI" id="CHEBI:15378"/>
        <dbReference type="ChEBI" id="CHEBI:57683"/>
        <dbReference type="ChEBI" id="CHEBI:58211"/>
        <dbReference type="ChEBI" id="CHEBI:132519"/>
        <dbReference type="ChEBI" id="CHEBI:132520"/>
        <dbReference type="EC" id="2.4.1.261"/>
    </reaction>
    <physiologicalReaction direction="left-to-right" evidence="2">
        <dbReference type="Rhea" id="RHEA:29540"/>
    </physiologicalReaction>
</comment>
<comment type="pathway">
    <text evidence="2">Protein modification; protein glycosylation.</text>
</comment>
<comment type="subcellular location">
    <subcellularLocation>
        <location evidence="2">Endoplasmic reticulum membrane</location>
        <topology evidence="1">Multi-pass membrane protein</topology>
    </subcellularLocation>
</comment>
<comment type="similarity">
    <text evidence="5">Belongs to the glycosyltransferase 22 family.</text>
</comment>
<comment type="sequence caution" evidence="5">
    <conflict type="frameshift">
        <sequence resource="EMBL-CDS" id="BAC39717"/>
    </conflict>
</comment>
<organism>
    <name type="scientific">Mus musculus</name>
    <name type="common">Mouse</name>
    <dbReference type="NCBI Taxonomy" id="10090"/>
    <lineage>
        <taxon>Eukaryota</taxon>
        <taxon>Metazoa</taxon>
        <taxon>Chordata</taxon>
        <taxon>Craniata</taxon>
        <taxon>Vertebrata</taxon>
        <taxon>Euteleostomi</taxon>
        <taxon>Mammalia</taxon>
        <taxon>Eutheria</taxon>
        <taxon>Euarchontoglires</taxon>
        <taxon>Glires</taxon>
        <taxon>Rodentia</taxon>
        <taxon>Myomorpha</taxon>
        <taxon>Muroidea</taxon>
        <taxon>Muridae</taxon>
        <taxon>Murinae</taxon>
        <taxon>Mus</taxon>
        <taxon>Mus</taxon>
    </lineage>
</organism>
<sequence length="611" mass="69561">MASRRARQRLKGGGGGGGGGGDAGPAAEKLEQLGSREAGAEPRPESGNKAGQVWAPEGSTAFKCLLSARLCAALLSNISDCDETFNYWEPTHYLIYGKGFQTWEYSPVYAIRSYAYLLLHAWPAAFHARILQTNKILVFYFLRCLLAFVSCVCELYFYKAVCKKFGLHVSRMMLAFLVLSTGMFCSSSAFLPSSFCMYTTLIAMTGWYMDKTPIAVLGVAAGAILGWPFSAALGLPIAFDLLARKHRWKSFLLWSLVALALFLVPVVVIDSYYYGKLVVAPLNIVLYNVFTSHGPDLYGTEPWYFYLINGFLNFNVAFALALLVLPLTFLMEYLLQRFHVQNLGHPYWLTLAPMYIWFIIFFIQPHKEERFLFPVYPLICLCGAVALSALQKCYHFVFQRYRLEHYTVTSNWLALGTVFLFGLLSFSRSVALFRGYHGPLDLYPEFYRIATDPTIHTVPEGRPVNVCVGKEWYRFPSSFLLPDNWQLQFIPSEFRGQLPKPFAEGPLATRTVPTHMNDQNREEPSRYIDISKCHYLVDLDTMRETPREPNYSSHREEWVSLAHRPFLDASRSSKLLRAFYVPFLSDQYTVYVNYTILKPRKAKPSRKKSGG</sequence>
<evidence type="ECO:0000250" key="1">
    <source>
        <dbReference type="UniProtKB" id="P53868"/>
    </source>
</evidence>
<evidence type="ECO:0000250" key="2">
    <source>
        <dbReference type="UniProtKB" id="Q9H6U8"/>
    </source>
</evidence>
<evidence type="ECO:0000255" key="3"/>
<evidence type="ECO:0000256" key="4">
    <source>
        <dbReference type="SAM" id="MobiDB-lite"/>
    </source>
</evidence>
<evidence type="ECO:0000305" key="5"/>
<evidence type="ECO:0000312" key="6">
    <source>
        <dbReference type="MGI" id="MGI:1924753"/>
    </source>
</evidence>
<dbReference type="EC" id="2.4.1.259" evidence="2"/>
<dbReference type="EC" id="2.4.1.261" evidence="2"/>
<dbReference type="EMBL" id="AK020231">
    <property type="protein sequence ID" value="BAC25619.1"/>
    <property type="molecule type" value="mRNA"/>
</dbReference>
<dbReference type="EMBL" id="AK050335">
    <property type="protein sequence ID" value="BAC34195.1"/>
    <property type="molecule type" value="mRNA"/>
</dbReference>
<dbReference type="EMBL" id="AK054293">
    <property type="protein sequence ID" value="BAC35720.1"/>
    <property type="molecule type" value="mRNA"/>
</dbReference>
<dbReference type="EMBL" id="AK086674">
    <property type="protein sequence ID" value="BAC39717.1"/>
    <property type="status" value="ALT_FRAME"/>
    <property type="molecule type" value="mRNA"/>
</dbReference>
<dbReference type="EMBL" id="BC021791">
    <property type="protein sequence ID" value="AAH21791.1"/>
    <property type="molecule type" value="mRNA"/>
</dbReference>
<dbReference type="CCDS" id="CCDS23175.1"/>
<dbReference type="RefSeq" id="NP_598742.1">
    <property type="nucleotide sequence ID" value="NM_133981.3"/>
</dbReference>
<dbReference type="FunCoup" id="Q8VDI9">
    <property type="interactions" value="2601"/>
</dbReference>
<dbReference type="STRING" id="10090.ENSMUSP00000034561"/>
<dbReference type="CAZy" id="GT22">
    <property type="family name" value="Glycosyltransferase Family 22"/>
</dbReference>
<dbReference type="GlyCosmos" id="Q8VDI9">
    <property type="glycosylation" value="3 sites, No reported glycans"/>
</dbReference>
<dbReference type="GlyGen" id="Q8VDI9">
    <property type="glycosylation" value="3 sites, 1 N-linked glycan (1 site)"/>
</dbReference>
<dbReference type="iPTMnet" id="Q8VDI9"/>
<dbReference type="PhosphoSitePlus" id="Q8VDI9"/>
<dbReference type="SwissPalm" id="Q8VDI9"/>
<dbReference type="PaxDb" id="10090-ENSMUSP00000034561"/>
<dbReference type="PeptideAtlas" id="Q8VDI9"/>
<dbReference type="ProteomicsDB" id="296224"/>
<dbReference type="Pumba" id="Q8VDI9"/>
<dbReference type="DNASU" id="102580"/>
<dbReference type="Ensembl" id="ENSMUST00000034561.11">
    <property type="protein sequence ID" value="ENSMUSP00000034561.5"/>
    <property type="gene ID" value="ENSMUSG00000032059.14"/>
</dbReference>
<dbReference type="GeneID" id="102580"/>
<dbReference type="KEGG" id="mmu:102580"/>
<dbReference type="UCSC" id="uc009pkt.2">
    <property type="organism name" value="mouse"/>
</dbReference>
<dbReference type="AGR" id="MGI:1924753"/>
<dbReference type="CTD" id="79796"/>
<dbReference type="MGI" id="MGI:1924753">
    <property type="gene designation" value="Alg9"/>
</dbReference>
<dbReference type="VEuPathDB" id="HostDB:ENSMUSG00000032059"/>
<dbReference type="eggNOG" id="KOG2515">
    <property type="taxonomic scope" value="Eukaryota"/>
</dbReference>
<dbReference type="GeneTree" id="ENSGT00950000183090"/>
<dbReference type="HOGENOM" id="CLU_018152_1_1_1"/>
<dbReference type="InParanoid" id="Q8VDI9"/>
<dbReference type="OMA" id="PRDMHAK"/>
<dbReference type="OrthoDB" id="497541at2759"/>
<dbReference type="PhylomeDB" id="Q8VDI9"/>
<dbReference type="Reactome" id="R-MMU-446193">
    <property type="pathway name" value="Biosynthesis of the N-glycan precursor (dolichol lipid-linked oligosaccharide, LLO) and transfer to a nascent protein"/>
</dbReference>
<dbReference type="UniPathway" id="UPA00378"/>
<dbReference type="BioGRID-ORCS" id="102580">
    <property type="hits" value="10 hits in 77 CRISPR screens"/>
</dbReference>
<dbReference type="ChiTaRS" id="Alg9">
    <property type="organism name" value="mouse"/>
</dbReference>
<dbReference type="PRO" id="PR:Q8VDI9"/>
<dbReference type="Proteomes" id="UP000000589">
    <property type="component" value="Chromosome 9"/>
</dbReference>
<dbReference type="RNAct" id="Q8VDI9">
    <property type="molecule type" value="protein"/>
</dbReference>
<dbReference type="Bgee" id="ENSMUSG00000032059">
    <property type="expression patterns" value="Expressed in spermatocyte and 240 other cell types or tissues"/>
</dbReference>
<dbReference type="ExpressionAtlas" id="Q8VDI9">
    <property type="expression patterns" value="baseline and differential"/>
</dbReference>
<dbReference type="GO" id="GO:0005789">
    <property type="term" value="C:endoplasmic reticulum membrane"/>
    <property type="evidence" value="ECO:0007669"/>
    <property type="project" value="UniProtKB-SubCell"/>
</dbReference>
<dbReference type="GO" id="GO:0052926">
    <property type="term" value="F:dol-P-Man:Man(6)GlcNAc(2)-PP-Dol alpha-1,2-mannosyltransferase activity"/>
    <property type="evidence" value="ECO:0007669"/>
    <property type="project" value="UniProtKB-EC"/>
</dbReference>
<dbReference type="GO" id="GO:0052918">
    <property type="term" value="F:dol-P-Man:Man(8)GlcNAc(2)-PP-Dol alpha-1,2-mannosyltransferase activity"/>
    <property type="evidence" value="ECO:0007669"/>
    <property type="project" value="UniProtKB-EC"/>
</dbReference>
<dbReference type="GO" id="GO:0006488">
    <property type="term" value="P:dolichol-linked oligosaccharide biosynthetic process"/>
    <property type="evidence" value="ECO:0007669"/>
    <property type="project" value="Ensembl"/>
</dbReference>
<dbReference type="InterPro" id="IPR005599">
    <property type="entry name" value="GPI_mannosylTrfase"/>
</dbReference>
<dbReference type="PANTHER" id="PTHR22760:SF2">
    <property type="entry name" value="ALPHA-1,2-MANNOSYLTRANSFERASE ALG9"/>
    <property type="match status" value="1"/>
</dbReference>
<dbReference type="PANTHER" id="PTHR22760">
    <property type="entry name" value="GLYCOSYLTRANSFERASE"/>
    <property type="match status" value="1"/>
</dbReference>
<dbReference type="Pfam" id="PF03901">
    <property type="entry name" value="Glyco_transf_22"/>
    <property type="match status" value="1"/>
</dbReference>
<protein>
    <recommendedName>
        <fullName evidence="2">Alpha-1,2-mannosyltransferase ALG9</fullName>
        <ecNumber evidence="2">2.4.1.259</ecNumber>
        <ecNumber evidence="2">2.4.1.261</ecNumber>
    </recommendedName>
    <alternativeName>
        <fullName evidence="5">Dol-P-Man:Man(6)GlcNAc(2)-PP-Dol alpha-1,2-mannosyltransferase</fullName>
    </alternativeName>
    <alternativeName>
        <fullName evidence="5">Dol-P-Man:Man(8)GlcNAc(2)-PP-Dol alpha-1,2-mannosyltransferase</fullName>
    </alternativeName>
</protein>
<keyword id="KW-0256">Endoplasmic reticulum</keyword>
<keyword id="KW-0325">Glycoprotein</keyword>
<keyword id="KW-0328">Glycosyltransferase</keyword>
<keyword id="KW-0472">Membrane</keyword>
<keyword id="KW-1185">Reference proteome</keyword>
<keyword id="KW-0808">Transferase</keyword>
<keyword id="KW-0812">Transmembrane</keyword>
<keyword id="KW-1133">Transmembrane helix</keyword>
<accession>Q8VDI9</accession>
<accession>Q8BT44</accession>
<accession>Q8C378</accession>
<accession>Q8C7G0</accession>
<feature type="chain" id="PRO_0000215788" description="Alpha-1,2-mannosyltransferase ALG9">
    <location>
        <begin position="1"/>
        <end position="611"/>
    </location>
</feature>
<feature type="topological domain" description="Lumenal" evidence="3">
    <location>
        <begin position="1"/>
        <end position="135"/>
    </location>
</feature>
<feature type="transmembrane region" description="Helical" evidence="3">
    <location>
        <begin position="136"/>
        <end position="156"/>
    </location>
</feature>
<feature type="topological domain" description="Cytoplasmic" evidence="3">
    <location>
        <begin position="157"/>
        <end position="171"/>
    </location>
</feature>
<feature type="transmembrane region" description="Helical" evidence="3">
    <location>
        <begin position="172"/>
        <end position="192"/>
    </location>
</feature>
<feature type="topological domain" description="Lumenal" evidence="3">
    <location>
        <begin position="193"/>
        <end position="213"/>
    </location>
</feature>
<feature type="transmembrane region" description="Helical" evidence="3">
    <location>
        <begin position="214"/>
        <end position="234"/>
    </location>
</feature>
<feature type="topological domain" description="Cytoplasmic" evidence="3">
    <location>
        <begin position="235"/>
        <end position="249"/>
    </location>
</feature>
<feature type="transmembrane region" description="Helical" evidence="3">
    <location>
        <begin position="250"/>
        <end position="270"/>
    </location>
</feature>
<feature type="topological domain" description="Lumenal" evidence="3">
    <location>
        <begin position="271"/>
        <end position="310"/>
    </location>
</feature>
<feature type="transmembrane region" description="Helical" evidence="3">
    <location>
        <begin position="311"/>
        <end position="331"/>
    </location>
</feature>
<feature type="topological domain" description="Cytoplasmic" evidence="3">
    <location>
        <begin position="332"/>
        <end position="342"/>
    </location>
</feature>
<feature type="transmembrane region" description="Helical" evidence="3">
    <location>
        <begin position="343"/>
        <end position="363"/>
    </location>
</feature>
<feature type="topological domain" description="Lumenal" evidence="3">
    <location>
        <begin position="364"/>
        <end position="370"/>
    </location>
</feature>
<feature type="transmembrane region" description="Helical" evidence="3">
    <location>
        <begin position="371"/>
        <end position="391"/>
    </location>
</feature>
<feature type="topological domain" description="Cytoplasmic" evidence="3">
    <location>
        <begin position="392"/>
        <end position="405"/>
    </location>
</feature>
<feature type="transmembrane region" description="Helical" evidence="3">
    <location>
        <begin position="406"/>
        <end position="426"/>
    </location>
</feature>
<feature type="topological domain" description="Lumenal" evidence="3">
    <location>
        <begin position="427"/>
        <end position="611"/>
    </location>
</feature>
<feature type="region of interest" description="Disordered" evidence="4">
    <location>
        <begin position="1"/>
        <end position="51"/>
    </location>
</feature>
<feature type="compositionally biased region" description="Basic residues" evidence="4">
    <location>
        <begin position="1"/>
        <end position="10"/>
    </location>
</feature>
<feature type="compositionally biased region" description="Gly residues" evidence="4">
    <location>
        <begin position="11"/>
        <end position="23"/>
    </location>
</feature>
<feature type="glycosylation site" description="N-linked (GlcNAc...) asparagine" evidence="3">
    <location>
        <position position="77"/>
    </location>
</feature>
<feature type="glycosylation site" description="N-linked (GlcNAc...) asparagine" evidence="3">
    <location>
        <position position="550"/>
    </location>
</feature>
<feature type="glycosylation site" description="N-linked (GlcNAc...) asparagine" evidence="3">
    <location>
        <position position="593"/>
    </location>
</feature>
<feature type="sequence conflict" description="In Ref. 1; BAC34195." evidence="5" ref="1">
    <original>Q</original>
    <variation>R</variation>
    <location>
        <position position="8"/>
    </location>
</feature>
<gene>
    <name evidence="6" type="primary">Alg9</name>
</gene>
<reference key="1">
    <citation type="journal article" date="2005" name="Science">
        <title>The transcriptional landscape of the mammalian genome.</title>
        <authorList>
            <person name="Carninci P."/>
            <person name="Kasukawa T."/>
            <person name="Katayama S."/>
            <person name="Gough J."/>
            <person name="Frith M.C."/>
            <person name="Maeda N."/>
            <person name="Oyama R."/>
            <person name="Ravasi T."/>
            <person name="Lenhard B."/>
            <person name="Wells C."/>
            <person name="Kodzius R."/>
            <person name="Shimokawa K."/>
            <person name="Bajic V.B."/>
            <person name="Brenner S.E."/>
            <person name="Batalov S."/>
            <person name="Forrest A.R."/>
            <person name="Zavolan M."/>
            <person name="Davis M.J."/>
            <person name="Wilming L.G."/>
            <person name="Aidinis V."/>
            <person name="Allen J.E."/>
            <person name="Ambesi-Impiombato A."/>
            <person name="Apweiler R."/>
            <person name="Aturaliya R.N."/>
            <person name="Bailey T.L."/>
            <person name="Bansal M."/>
            <person name="Baxter L."/>
            <person name="Beisel K.W."/>
            <person name="Bersano T."/>
            <person name="Bono H."/>
            <person name="Chalk A.M."/>
            <person name="Chiu K.P."/>
            <person name="Choudhary V."/>
            <person name="Christoffels A."/>
            <person name="Clutterbuck D.R."/>
            <person name="Crowe M.L."/>
            <person name="Dalla E."/>
            <person name="Dalrymple B.P."/>
            <person name="de Bono B."/>
            <person name="Della Gatta G."/>
            <person name="di Bernardo D."/>
            <person name="Down T."/>
            <person name="Engstrom P."/>
            <person name="Fagiolini M."/>
            <person name="Faulkner G."/>
            <person name="Fletcher C.F."/>
            <person name="Fukushima T."/>
            <person name="Furuno M."/>
            <person name="Futaki S."/>
            <person name="Gariboldi M."/>
            <person name="Georgii-Hemming P."/>
            <person name="Gingeras T.R."/>
            <person name="Gojobori T."/>
            <person name="Green R.E."/>
            <person name="Gustincich S."/>
            <person name="Harbers M."/>
            <person name="Hayashi Y."/>
            <person name="Hensch T.K."/>
            <person name="Hirokawa N."/>
            <person name="Hill D."/>
            <person name="Huminiecki L."/>
            <person name="Iacono M."/>
            <person name="Ikeo K."/>
            <person name="Iwama A."/>
            <person name="Ishikawa T."/>
            <person name="Jakt M."/>
            <person name="Kanapin A."/>
            <person name="Katoh M."/>
            <person name="Kawasawa Y."/>
            <person name="Kelso J."/>
            <person name="Kitamura H."/>
            <person name="Kitano H."/>
            <person name="Kollias G."/>
            <person name="Krishnan S.P."/>
            <person name="Kruger A."/>
            <person name="Kummerfeld S.K."/>
            <person name="Kurochkin I.V."/>
            <person name="Lareau L.F."/>
            <person name="Lazarevic D."/>
            <person name="Lipovich L."/>
            <person name="Liu J."/>
            <person name="Liuni S."/>
            <person name="McWilliam S."/>
            <person name="Madan Babu M."/>
            <person name="Madera M."/>
            <person name="Marchionni L."/>
            <person name="Matsuda H."/>
            <person name="Matsuzawa S."/>
            <person name="Miki H."/>
            <person name="Mignone F."/>
            <person name="Miyake S."/>
            <person name="Morris K."/>
            <person name="Mottagui-Tabar S."/>
            <person name="Mulder N."/>
            <person name="Nakano N."/>
            <person name="Nakauchi H."/>
            <person name="Ng P."/>
            <person name="Nilsson R."/>
            <person name="Nishiguchi S."/>
            <person name="Nishikawa S."/>
            <person name="Nori F."/>
            <person name="Ohara O."/>
            <person name="Okazaki Y."/>
            <person name="Orlando V."/>
            <person name="Pang K.C."/>
            <person name="Pavan W.J."/>
            <person name="Pavesi G."/>
            <person name="Pesole G."/>
            <person name="Petrovsky N."/>
            <person name="Piazza S."/>
            <person name="Reed J."/>
            <person name="Reid J.F."/>
            <person name="Ring B.Z."/>
            <person name="Ringwald M."/>
            <person name="Rost B."/>
            <person name="Ruan Y."/>
            <person name="Salzberg S.L."/>
            <person name="Sandelin A."/>
            <person name="Schneider C."/>
            <person name="Schoenbach C."/>
            <person name="Sekiguchi K."/>
            <person name="Semple C.A."/>
            <person name="Seno S."/>
            <person name="Sessa L."/>
            <person name="Sheng Y."/>
            <person name="Shibata Y."/>
            <person name="Shimada H."/>
            <person name="Shimada K."/>
            <person name="Silva D."/>
            <person name="Sinclair B."/>
            <person name="Sperling S."/>
            <person name="Stupka E."/>
            <person name="Sugiura K."/>
            <person name="Sultana R."/>
            <person name="Takenaka Y."/>
            <person name="Taki K."/>
            <person name="Tammoja K."/>
            <person name="Tan S.L."/>
            <person name="Tang S."/>
            <person name="Taylor M.S."/>
            <person name="Tegner J."/>
            <person name="Teichmann S.A."/>
            <person name="Ueda H.R."/>
            <person name="van Nimwegen E."/>
            <person name="Verardo R."/>
            <person name="Wei C.L."/>
            <person name="Yagi K."/>
            <person name="Yamanishi H."/>
            <person name="Zabarovsky E."/>
            <person name="Zhu S."/>
            <person name="Zimmer A."/>
            <person name="Hide W."/>
            <person name="Bult C."/>
            <person name="Grimmond S.M."/>
            <person name="Teasdale R.D."/>
            <person name="Liu E.T."/>
            <person name="Brusic V."/>
            <person name="Quackenbush J."/>
            <person name="Wahlestedt C."/>
            <person name="Mattick J.S."/>
            <person name="Hume D.A."/>
            <person name="Kai C."/>
            <person name="Sasaki D."/>
            <person name="Tomaru Y."/>
            <person name="Fukuda S."/>
            <person name="Kanamori-Katayama M."/>
            <person name="Suzuki M."/>
            <person name="Aoki J."/>
            <person name="Arakawa T."/>
            <person name="Iida J."/>
            <person name="Imamura K."/>
            <person name="Itoh M."/>
            <person name="Kato T."/>
            <person name="Kawaji H."/>
            <person name="Kawagashira N."/>
            <person name="Kawashima T."/>
            <person name="Kojima M."/>
            <person name="Kondo S."/>
            <person name="Konno H."/>
            <person name="Nakano K."/>
            <person name="Ninomiya N."/>
            <person name="Nishio T."/>
            <person name="Okada M."/>
            <person name="Plessy C."/>
            <person name="Shibata K."/>
            <person name="Shiraki T."/>
            <person name="Suzuki S."/>
            <person name="Tagami M."/>
            <person name="Waki K."/>
            <person name="Watahiki A."/>
            <person name="Okamura-Oho Y."/>
            <person name="Suzuki H."/>
            <person name="Kawai J."/>
            <person name="Hayashizaki Y."/>
        </authorList>
    </citation>
    <scope>NUCLEOTIDE SEQUENCE [LARGE SCALE MRNA]</scope>
    <source>
        <strain>C57BL/6J</strain>
        <tissue>Embryo</tissue>
        <tissue>Head</tissue>
        <tissue>Liver</tissue>
        <tissue>Ovary</tissue>
    </source>
</reference>
<reference key="2">
    <citation type="journal article" date="2004" name="Genome Res.">
        <title>The status, quality, and expansion of the NIH full-length cDNA project: the Mammalian Gene Collection (MGC).</title>
        <authorList>
            <consortium name="The MGC Project Team"/>
        </authorList>
    </citation>
    <scope>NUCLEOTIDE SEQUENCE [LARGE SCALE MRNA]</scope>
    <source>
        <strain>FVB/N</strain>
        <tissue>Mammary tumor</tissue>
    </source>
</reference>
<proteinExistence type="evidence at transcript level"/>